<gene>
    <name evidence="1" type="primary">rpmB</name>
    <name type="ordered locus">CC_0661</name>
</gene>
<reference key="1">
    <citation type="journal article" date="2001" name="Proc. Natl. Acad. Sci. U.S.A.">
        <title>Complete genome sequence of Caulobacter crescentus.</title>
        <authorList>
            <person name="Nierman W.C."/>
            <person name="Feldblyum T.V."/>
            <person name="Laub M.T."/>
            <person name="Paulsen I.T."/>
            <person name="Nelson K.E."/>
            <person name="Eisen J.A."/>
            <person name="Heidelberg J.F."/>
            <person name="Alley M.R.K."/>
            <person name="Ohta N."/>
            <person name="Maddock J.R."/>
            <person name="Potocka I."/>
            <person name="Nelson W.C."/>
            <person name="Newton A."/>
            <person name="Stephens C."/>
            <person name="Phadke N.D."/>
            <person name="Ely B."/>
            <person name="DeBoy R.T."/>
            <person name="Dodson R.J."/>
            <person name="Durkin A.S."/>
            <person name="Gwinn M.L."/>
            <person name="Haft D.H."/>
            <person name="Kolonay J.F."/>
            <person name="Smit J."/>
            <person name="Craven M.B."/>
            <person name="Khouri H.M."/>
            <person name="Shetty J."/>
            <person name="Berry K.J."/>
            <person name="Utterback T.R."/>
            <person name="Tran K."/>
            <person name="Wolf A.M."/>
            <person name="Vamathevan J.J."/>
            <person name="Ermolaeva M.D."/>
            <person name="White O."/>
            <person name="Salzberg S.L."/>
            <person name="Venter J.C."/>
            <person name="Shapiro L."/>
            <person name="Fraser C.M."/>
        </authorList>
    </citation>
    <scope>NUCLEOTIDE SEQUENCE [LARGE SCALE GENOMIC DNA]</scope>
    <source>
        <strain>ATCC 19089 / CIP 103742 / CB 15</strain>
    </source>
</reference>
<evidence type="ECO:0000255" key="1">
    <source>
        <dbReference type="HAMAP-Rule" id="MF_00373"/>
    </source>
</evidence>
<evidence type="ECO:0000305" key="2"/>
<sequence length="99" mass="10630">MSRRCELTGIGPMVGHNVSHSNIKTKRRFLPALSPATLQSESLGQSFKLRISNAALRTLDFKGGLDTFLLGAKDEQLSPRALKIKAQVKAKAKAAAQAA</sequence>
<accession>Q9AAE1</accession>
<protein>
    <recommendedName>
        <fullName evidence="1">Large ribosomal subunit protein bL28</fullName>
    </recommendedName>
    <alternativeName>
        <fullName evidence="2">50S ribosomal protein L28</fullName>
    </alternativeName>
</protein>
<comment type="similarity">
    <text evidence="1">Belongs to the bacterial ribosomal protein bL28 family.</text>
</comment>
<feature type="chain" id="PRO_0000178452" description="Large ribosomal subunit protein bL28">
    <location>
        <begin position="1"/>
        <end position="99"/>
    </location>
</feature>
<name>RL28_CAUVC</name>
<organism>
    <name type="scientific">Caulobacter vibrioides (strain ATCC 19089 / CIP 103742 / CB 15)</name>
    <name type="common">Caulobacter crescentus</name>
    <dbReference type="NCBI Taxonomy" id="190650"/>
    <lineage>
        <taxon>Bacteria</taxon>
        <taxon>Pseudomonadati</taxon>
        <taxon>Pseudomonadota</taxon>
        <taxon>Alphaproteobacteria</taxon>
        <taxon>Caulobacterales</taxon>
        <taxon>Caulobacteraceae</taxon>
        <taxon>Caulobacter</taxon>
    </lineage>
</organism>
<keyword id="KW-1185">Reference proteome</keyword>
<keyword id="KW-0687">Ribonucleoprotein</keyword>
<keyword id="KW-0689">Ribosomal protein</keyword>
<proteinExistence type="inferred from homology"/>
<dbReference type="EMBL" id="AE005673">
    <property type="protein sequence ID" value="AAK22646.1"/>
    <property type="molecule type" value="Genomic_DNA"/>
</dbReference>
<dbReference type="PIR" id="B87331">
    <property type="entry name" value="B87331"/>
</dbReference>
<dbReference type="RefSeq" id="NP_419478.1">
    <property type="nucleotide sequence ID" value="NC_002696.2"/>
</dbReference>
<dbReference type="RefSeq" id="WP_010918547.1">
    <property type="nucleotide sequence ID" value="NC_002696.2"/>
</dbReference>
<dbReference type="SMR" id="Q9AAE1"/>
<dbReference type="STRING" id="190650.CC_0661"/>
<dbReference type="DNASU" id="942584"/>
<dbReference type="EnsemblBacteria" id="AAK22646">
    <property type="protein sequence ID" value="AAK22646"/>
    <property type="gene ID" value="CC_0661"/>
</dbReference>
<dbReference type="KEGG" id="ccr:CC_0661"/>
<dbReference type="PATRIC" id="fig|190650.5.peg.672"/>
<dbReference type="eggNOG" id="COG0227">
    <property type="taxonomic scope" value="Bacteria"/>
</dbReference>
<dbReference type="HOGENOM" id="CLU_064548_4_2_5"/>
<dbReference type="BioCyc" id="CAULO:CC0661-MONOMER"/>
<dbReference type="Proteomes" id="UP000001816">
    <property type="component" value="Chromosome"/>
</dbReference>
<dbReference type="GO" id="GO:0022625">
    <property type="term" value="C:cytosolic large ribosomal subunit"/>
    <property type="evidence" value="ECO:0007669"/>
    <property type="project" value="TreeGrafter"/>
</dbReference>
<dbReference type="GO" id="GO:0003735">
    <property type="term" value="F:structural constituent of ribosome"/>
    <property type="evidence" value="ECO:0007669"/>
    <property type="project" value="InterPro"/>
</dbReference>
<dbReference type="GO" id="GO:0006412">
    <property type="term" value="P:translation"/>
    <property type="evidence" value="ECO:0007669"/>
    <property type="project" value="UniProtKB-UniRule"/>
</dbReference>
<dbReference type="Gene3D" id="2.30.170.40">
    <property type="entry name" value="Ribosomal protein L28/L24"/>
    <property type="match status" value="1"/>
</dbReference>
<dbReference type="HAMAP" id="MF_00373">
    <property type="entry name" value="Ribosomal_bL28"/>
    <property type="match status" value="1"/>
</dbReference>
<dbReference type="InterPro" id="IPR026569">
    <property type="entry name" value="Ribosomal_bL28"/>
</dbReference>
<dbReference type="InterPro" id="IPR034704">
    <property type="entry name" value="Ribosomal_bL28/bL31-like_sf"/>
</dbReference>
<dbReference type="InterPro" id="IPR001383">
    <property type="entry name" value="Ribosomal_bL28_bact-type"/>
</dbReference>
<dbReference type="InterPro" id="IPR037147">
    <property type="entry name" value="Ribosomal_bL28_sf"/>
</dbReference>
<dbReference type="NCBIfam" id="TIGR00009">
    <property type="entry name" value="L28"/>
    <property type="match status" value="1"/>
</dbReference>
<dbReference type="PANTHER" id="PTHR13528">
    <property type="entry name" value="39S RIBOSOMAL PROTEIN L28, MITOCHONDRIAL"/>
    <property type="match status" value="1"/>
</dbReference>
<dbReference type="PANTHER" id="PTHR13528:SF2">
    <property type="entry name" value="LARGE RIBOSOMAL SUBUNIT PROTEIN BL28M"/>
    <property type="match status" value="1"/>
</dbReference>
<dbReference type="Pfam" id="PF00830">
    <property type="entry name" value="Ribosomal_L28"/>
    <property type="match status" value="1"/>
</dbReference>
<dbReference type="SUPFAM" id="SSF143800">
    <property type="entry name" value="L28p-like"/>
    <property type="match status" value="1"/>
</dbReference>